<reference key="1">
    <citation type="journal article" date="2005" name="J. Bacteriol.">
        <title>Insights on evolution of virulence and resistance from the complete genome analysis of an early methicillin-resistant Staphylococcus aureus strain and a biofilm-producing methicillin-resistant Staphylococcus epidermidis strain.</title>
        <authorList>
            <person name="Gill S.R."/>
            <person name="Fouts D.E."/>
            <person name="Archer G.L."/>
            <person name="Mongodin E.F."/>
            <person name="DeBoy R.T."/>
            <person name="Ravel J."/>
            <person name="Paulsen I.T."/>
            <person name="Kolonay J.F."/>
            <person name="Brinkac L.M."/>
            <person name="Beanan M.J."/>
            <person name="Dodson R.J."/>
            <person name="Daugherty S.C."/>
            <person name="Madupu R."/>
            <person name="Angiuoli S.V."/>
            <person name="Durkin A.S."/>
            <person name="Haft D.H."/>
            <person name="Vamathevan J.J."/>
            <person name="Khouri H."/>
            <person name="Utterback T.R."/>
            <person name="Lee C."/>
            <person name="Dimitrov G."/>
            <person name="Jiang L."/>
            <person name="Qin H."/>
            <person name="Weidman J."/>
            <person name="Tran K."/>
            <person name="Kang K.H."/>
            <person name="Hance I.R."/>
            <person name="Nelson K.E."/>
            <person name="Fraser C.M."/>
        </authorList>
    </citation>
    <scope>NUCLEOTIDE SEQUENCE [LARGE SCALE GENOMIC DNA]</scope>
    <source>
        <strain>ATCC 35984 / DSM 28319 / BCRC 17069 / CCUG 31568 / BM 3577 / RP62A</strain>
    </source>
</reference>
<evidence type="ECO:0000255" key="1">
    <source>
        <dbReference type="HAMAP-Rule" id="MF_02033"/>
    </source>
</evidence>
<evidence type="ECO:0000256" key="2">
    <source>
        <dbReference type="SAM" id="MobiDB-lite"/>
    </source>
</evidence>
<accession>Q5HQ07</accession>
<comment type="function">
    <text evidence="1">Cell division protein that is involved in the assembly of the Z ring. May serve as a membrane anchor for the Z ring.</text>
</comment>
<comment type="subunit">
    <text evidence="1">Self-interacts. Interacts with FtsZ.</text>
</comment>
<comment type="subcellular location">
    <subcellularLocation>
        <location evidence="1">Cell membrane</location>
        <topology evidence="1">Peripheral membrane protein</topology>
        <orientation evidence="1">Cytoplasmic side</orientation>
    </subcellularLocation>
    <text evidence="1">Localizes to the Z ring in an FtsZ-dependent manner. Targeted to the membrane through a conserved C-terminal amphipathic helix.</text>
</comment>
<comment type="similarity">
    <text evidence="1">Belongs to the FtsA/MreB family.</text>
</comment>
<dbReference type="EMBL" id="CP000029">
    <property type="protein sequence ID" value="AAW54138.1"/>
    <property type="molecule type" value="Genomic_DNA"/>
</dbReference>
<dbReference type="RefSeq" id="WP_002446229.1">
    <property type="nucleotide sequence ID" value="NC_002976.3"/>
</dbReference>
<dbReference type="SMR" id="Q5HQ07"/>
<dbReference type="STRING" id="176279.SERP0750"/>
<dbReference type="KEGG" id="ser:SERP0750"/>
<dbReference type="eggNOG" id="COG0849">
    <property type="taxonomic scope" value="Bacteria"/>
</dbReference>
<dbReference type="HOGENOM" id="CLU_037850_1_0_9"/>
<dbReference type="Proteomes" id="UP000000531">
    <property type="component" value="Chromosome"/>
</dbReference>
<dbReference type="GO" id="GO:0032153">
    <property type="term" value="C:cell division site"/>
    <property type="evidence" value="ECO:0007669"/>
    <property type="project" value="UniProtKB-UniRule"/>
</dbReference>
<dbReference type="GO" id="GO:0009898">
    <property type="term" value="C:cytoplasmic side of plasma membrane"/>
    <property type="evidence" value="ECO:0007669"/>
    <property type="project" value="UniProtKB-UniRule"/>
</dbReference>
<dbReference type="GO" id="GO:0043093">
    <property type="term" value="P:FtsZ-dependent cytokinesis"/>
    <property type="evidence" value="ECO:0007669"/>
    <property type="project" value="UniProtKB-UniRule"/>
</dbReference>
<dbReference type="CDD" id="cd24048">
    <property type="entry name" value="ASKHA_NBD_FtsA"/>
    <property type="match status" value="1"/>
</dbReference>
<dbReference type="FunFam" id="3.30.420.40:FF:000196">
    <property type="entry name" value="Cell division protein FtsA"/>
    <property type="match status" value="1"/>
</dbReference>
<dbReference type="Gene3D" id="3.30.1490.110">
    <property type="match status" value="1"/>
</dbReference>
<dbReference type="Gene3D" id="3.30.420.40">
    <property type="match status" value="2"/>
</dbReference>
<dbReference type="HAMAP" id="MF_02033">
    <property type="entry name" value="FtsA"/>
    <property type="match status" value="1"/>
</dbReference>
<dbReference type="InterPro" id="IPR043129">
    <property type="entry name" value="ATPase_NBD"/>
</dbReference>
<dbReference type="InterPro" id="IPR020823">
    <property type="entry name" value="Cell_div_FtsA"/>
</dbReference>
<dbReference type="InterPro" id="IPR050696">
    <property type="entry name" value="FtsA/MreB"/>
</dbReference>
<dbReference type="InterPro" id="IPR003494">
    <property type="entry name" value="SHS2_FtsA"/>
</dbReference>
<dbReference type="NCBIfam" id="TIGR01174">
    <property type="entry name" value="ftsA"/>
    <property type="match status" value="1"/>
</dbReference>
<dbReference type="PANTHER" id="PTHR32432:SF4">
    <property type="entry name" value="CELL DIVISION PROTEIN FTSA"/>
    <property type="match status" value="1"/>
</dbReference>
<dbReference type="PANTHER" id="PTHR32432">
    <property type="entry name" value="CELL DIVISION PROTEIN FTSA-RELATED"/>
    <property type="match status" value="1"/>
</dbReference>
<dbReference type="Pfam" id="PF14450">
    <property type="entry name" value="FtsA"/>
    <property type="match status" value="1"/>
</dbReference>
<dbReference type="Pfam" id="PF02491">
    <property type="entry name" value="SHS2_FTSA"/>
    <property type="match status" value="1"/>
</dbReference>
<dbReference type="PIRSF" id="PIRSF003101">
    <property type="entry name" value="FtsA"/>
    <property type="match status" value="1"/>
</dbReference>
<dbReference type="SMART" id="SM00842">
    <property type="entry name" value="FtsA"/>
    <property type="match status" value="1"/>
</dbReference>
<dbReference type="SUPFAM" id="SSF53067">
    <property type="entry name" value="Actin-like ATPase domain"/>
    <property type="match status" value="2"/>
</dbReference>
<gene>
    <name evidence="1" type="primary">ftsA</name>
    <name type="ordered locus">SERP0750</name>
</gene>
<feature type="chain" id="PRO_0000062754" description="Cell division protein FtsA">
    <location>
        <begin position="1"/>
        <end position="464"/>
    </location>
</feature>
<feature type="region of interest" description="Disordered" evidence="2">
    <location>
        <begin position="392"/>
        <end position="464"/>
    </location>
</feature>
<feature type="compositionally biased region" description="Basic and acidic residues" evidence="2">
    <location>
        <begin position="416"/>
        <end position="455"/>
    </location>
</feature>
<organism>
    <name type="scientific">Staphylococcus epidermidis (strain ATCC 35984 / DSM 28319 / BCRC 17069 / CCUG 31568 / BM 3577 / RP62A)</name>
    <dbReference type="NCBI Taxonomy" id="176279"/>
    <lineage>
        <taxon>Bacteria</taxon>
        <taxon>Bacillati</taxon>
        <taxon>Bacillota</taxon>
        <taxon>Bacilli</taxon>
        <taxon>Bacillales</taxon>
        <taxon>Staphylococcaceae</taxon>
        <taxon>Staphylococcus</taxon>
    </lineage>
</organism>
<protein>
    <recommendedName>
        <fullName evidence="1">Cell division protein FtsA</fullName>
    </recommendedName>
</protein>
<sequence>MEEHYYVSIDIGSSSVKTIVGEKFHNGINVIGTGQTYTSGIKNGLIDDFDIARQAIKDTIKKASIASGVDIKDVFLKLPIIGTEVYDESNEIEFYEDTEIDGTHIESVLEGIRDKNDVPETEVINVFPIRFVVDKDNEVSDPKELIARHSLKVDAGVIAIQKSILINMIKCVEACGVDVLDVYSDAYNYGSILTPTEKELGACVIDIGEDLTQVAFYERGELVDAESIEMAGRDITDDIAQGLNTTYDTAEKVKHQYGHAFYDSASDQDVFSVDQVDSDEHVQYTQKDLSDFIEQRVEDIFFEVFDVLQELGLTKVNGGFVVTGGSANLLGVKELLQDMVSEKVRIHTPSQMGIRKPEFSSAISTISSSIAFDELLDYVTISYQDNEEFEEEVIESDKDSETKSSGFDWFKRKSNKKENDEVAPEAPREESYEDRENHLEDEQQTEGKAKEESKFKKLMKSLFE</sequence>
<keyword id="KW-0131">Cell cycle</keyword>
<keyword id="KW-0132">Cell division</keyword>
<keyword id="KW-1003">Cell membrane</keyword>
<keyword id="KW-0472">Membrane</keyword>
<keyword id="KW-1185">Reference proteome</keyword>
<proteinExistence type="inferred from homology"/>
<name>FTSA_STAEQ</name>